<proteinExistence type="inferred from homology"/>
<feature type="chain" id="PRO_0000264281" description="Protein-glutamate methylesterase/protein-glutamine glutaminase 1">
    <location>
        <begin position="1"/>
        <end position="361"/>
    </location>
</feature>
<feature type="domain" description="Response regulatory" evidence="1">
    <location>
        <begin position="10"/>
        <end position="127"/>
    </location>
</feature>
<feature type="domain" description="CheB-type methylesterase" evidence="1">
    <location>
        <begin position="167"/>
        <end position="359"/>
    </location>
</feature>
<feature type="active site" evidence="1">
    <location>
        <position position="179"/>
    </location>
</feature>
<feature type="active site" evidence="1">
    <location>
        <position position="205"/>
    </location>
</feature>
<feature type="active site" evidence="1">
    <location>
        <position position="301"/>
    </location>
</feature>
<feature type="modified residue" description="4-aspartylphosphate" evidence="1">
    <location>
        <position position="61"/>
    </location>
</feature>
<evidence type="ECO:0000255" key="1">
    <source>
        <dbReference type="HAMAP-Rule" id="MF_00099"/>
    </source>
</evidence>
<comment type="function">
    <text evidence="1">Involved in chemotaxis. Part of a chemotaxis signal transduction system that modulates chemotaxis in response to various stimuli. Catalyzes the demethylation of specific methylglutamate residues introduced into the chemoreceptors (methyl-accepting chemotaxis proteins or MCP) by CheR. Also mediates the irreversible deamidation of specific glutamine residues to glutamic acid.</text>
</comment>
<comment type="catalytic activity">
    <reaction evidence="1">
        <text>[protein]-L-glutamate 5-O-methyl ester + H2O = L-glutamyl-[protein] + methanol + H(+)</text>
        <dbReference type="Rhea" id="RHEA:23236"/>
        <dbReference type="Rhea" id="RHEA-COMP:10208"/>
        <dbReference type="Rhea" id="RHEA-COMP:10311"/>
        <dbReference type="ChEBI" id="CHEBI:15377"/>
        <dbReference type="ChEBI" id="CHEBI:15378"/>
        <dbReference type="ChEBI" id="CHEBI:17790"/>
        <dbReference type="ChEBI" id="CHEBI:29973"/>
        <dbReference type="ChEBI" id="CHEBI:82795"/>
        <dbReference type="EC" id="3.1.1.61"/>
    </reaction>
</comment>
<comment type="catalytic activity">
    <reaction evidence="1">
        <text>L-glutaminyl-[protein] + H2O = L-glutamyl-[protein] + NH4(+)</text>
        <dbReference type="Rhea" id="RHEA:16441"/>
        <dbReference type="Rhea" id="RHEA-COMP:10207"/>
        <dbReference type="Rhea" id="RHEA-COMP:10208"/>
        <dbReference type="ChEBI" id="CHEBI:15377"/>
        <dbReference type="ChEBI" id="CHEBI:28938"/>
        <dbReference type="ChEBI" id="CHEBI:29973"/>
        <dbReference type="ChEBI" id="CHEBI:30011"/>
        <dbReference type="EC" id="3.5.1.44"/>
    </reaction>
</comment>
<comment type="subcellular location">
    <subcellularLocation>
        <location evidence="1">Cytoplasm</location>
    </subcellularLocation>
</comment>
<comment type="domain">
    <text evidence="1">Contains a C-terminal catalytic domain, and an N-terminal region which modulates catalytic activity.</text>
</comment>
<comment type="PTM">
    <text evidence="1">Phosphorylated by CheA. Phosphorylation of the N-terminal regulatory domain activates the methylesterase activity.</text>
</comment>
<comment type="similarity">
    <text evidence="1">Belongs to the CheB family.</text>
</comment>
<accession>Q2SPQ1</accession>
<name>CHEB1_HAHCH</name>
<keyword id="KW-0145">Chemotaxis</keyword>
<keyword id="KW-0963">Cytoplasm</keyword>
<keyword id="KW-0378">Hydrolase</keyword>
<keyword id="KW-0597">Phosphoprotein</keyword>
<keyword id="KW-1185">Reference proteome</keyword>
<gene>
    <name evidence="1" type="primary">cheB1</name>
    <name type="ordered locus">HCH_00463</name>
</gene>
<sequence>MSSGAGKVYKVLVVDDSALMRKILVEILNQSPCLEVVDTAGDPYQARDKIKALSPDVITLDVEMPRMDGLTFLRNLMRLRPMPVVMISSLTEQGAAVTLDALEYGAVDFIAKPKIDLREGIEEKAQEIIDKVITAARIPHDKLLLKQQRLQTQHQKAAVGERPQPVFATTDKLIAVGASTGGLDAIRDLLDGLNMDLPGIVIAQHIPGAFSRSFAERLDRRLPMKVEEAYDNAPITMGRVYIAPGEYHLEVVRTGAKYVCRLSEAPPVNRHRPSVDVLFDSIVSAAGANAMAALLTGMGKDGAAGLLRLHEAGAYTIAQDEASSVVWGMPGAAVKLNAADDVLPLEKIAASVKRWYAENPG</sequence>
<protein>
    <recommendedName>
        <fullName evidence="1">Protein-glutamate methylesterase/protein-glutamine glutaminase 1</fullName>
        <ecNumber evidence="1">3.1.1.61</ecNumber>
        <ecNumber evidence="1">3.5.1.44</ecNumber>
    </recommendedName>
</protein>
<reference key="1">
    <citation type="journal article" date="2005" name="Nucleic Acids Res.">
        <title>Genomic blueprint of Hahella chejuensis, a marine microbe producing an algicidal agent.</title>
        <authorList>
            <person name="Jeong H."/>
            <person name="Yim J.H."/>
            <person name="Lee C."/>
            <person name="Choi S.-H."/>
            <person name="Park Y.K."/>
            <person name="Yoon S.H."/>
            <person name="Hur C.-G."/>
            <person name="Kang H.-Y."/>
            <person name="Kim D."/>
            <person name="Lee H.H."/>
            <person name="Park K.H."/>
            <person name="Park S.-H."/>
            <person name="Park H.-S."/>
            <person name="Lee H.K."/>
            <person name="Oh T.K."/>
            <person name="Kim J.F."/>
        </authorList>
    </citation>
    <scope>NUCLEOTIDE SEQUENCE [LARGE SCALE GENOMIC DNA]</scope>
    <source>
        <strain>KCTC 2396</strain>
    </source>
</reference>
<organism>
    <name type="scientific">Hahella chejuensis (strain KCTC 2396)</name>
    <dbReference type="NCBI Taxonomy" id="349521"/>
    <lineage>
        <taxon>Bacteria</taxon>
        <taxon>Pseudomonadati</taxon>
        <taxon>Pseudomonadota</taxon>
        <taxon>Gammaproteobacteria</taxon>
        <taxon>Oceanospirillales</taxon>
        <taxon>Hahellaceae</taxon>
        <taxon>Hahella</taxon>
    </lineage>
</organism>
<dbReference type="EC" id="3.1.1.61" evidence="1"/>
<dbReference type="EC" id="3.5.1.44" evidence="1"/>
<dbReference type="EMBL" id="CP000155">
    <property type="protein sequence ID" value="ABC27373.1"/>
    <property type="molecule type" value="Genomic_DNA"/>
</dbReference>
<dbReference type="RefSeq" id="WP_011394450.1">
    <property type="nucleotide sequence ID" value="NC_007645.1"/>
</dbReference>
<dbReference type="SMR" id="Q2SPQ1"/>
<dbReference type="STRING" id="349521.HCH_00463"/>
<dbReference type="KEGG" id="hch:HCH_00463"/>
<dbReference type="eggNOG" id="COG2201">
    <property type="taxonomic scope" value="Bacteria"/>
</dbReference>
<dbReference type="HOGENOM" id="CLU_000445_51_0_6"/>
<dbReference type="OrthoDB" id="9793421at2"/>
<dbReference type="Proteomes" id="UP000000238">
    <property type="component" value="Chromosome"/>
</dbReference>
<dbReference type="GO" id="GO:0005737">
    <property type="term" value="C:cytoplasm"/>
    <property type="evidence" value="ECO:0007669"/>
    <property type="project" value="UniProtKB-SubCell"/>
</dbReference>
<dbReference type="GO" id="GO:0000156">
    <property type="term" value="F:phosphorelay response regulator activity"/>
    <property type="evidence" value="ECO:0007669"/>
    <property type="project" value="InterPro"/>
</dbReference>
<dbReference type="GO" id="GO:0008984">
    <property type="term" value="F:protein-glutamate methylesterase activity"/>
    <property type="evidence" value="ECO:0007669"/>
    <property type="project" value="UniProtKB-UniRule"/>
</dbReference>
<dbReference type="GO" id="GO:0050568">
    <property type="term" value="F:protein-glutamine glutaminase activity"/>
    <property type="evidence" value="ECO:0007669"/>
    <property type="project" value="UniProtKB-UniRule"/>
</dbReference>
<dbReference type="GO" id="GO:0006935">
    <property type="term" value="P:chemotaxis"/>
    <property type="evidence" value="ECO:0007669"/>
    <property type="project" value="UniProtKB-UniRule"/>
</dbReference>
<dbReference type="CDD" id="cd16432">
    <property type="entry name" value="CheB_Rec"/>
    <property type="match status" value="1"/>
</dbReference>
<dbReference type="CDD" id="cd17541">
    <property type="entry name" value="REC_CheB-like"/>
    <property type="match status" value="1"/>
</dbReference>
<dbReference type="Gene3D" id="3.40.50.2300">
    <property type="match status" value="1"/>
</dbReference>
<dbReference type="Gene3D" id="3.40.50.180">
    <property type="entry name" value="Methylesterase CheB, C-terminal domain"/>
    <property type="match status" value="1"/>
</dbReference>
<dbReference type="HAMAP" id="MF_00099">
    <property type="entry name" value="CheB_chemtxs"/>
    <property type="match status" value="1"/>
</dbReference>
<dbReference type="InterPro" id="IPR008248">
    <property type="entry name" value="CheB-like"/>
</dbReference>
<dbReference type="InterPro" id="IPR035909">
    <property type="entry name" value="CheB_C"/>
</dbReference>
<dbReference type="InterPro" id="IPR011006">
    <property type="entry name" value="CheY-like_superfamily"/>
</dbReference>
<dbReference type="InterPro" id="IPR000673">
    <property type="entry name" value="Sig_transdc_resp-reg_Me-estase"/>
</dbReference>
<dbReference type="InterPro" id="IPR001789">
    <property type="entry name" value="Sig_transdc_resp-reg_receiver"/>
</dbReference>
<dbReference type="NCBIfam" id="NF001965">
    <property type="entry name" value="PRK00742.1"/>
    <property type="match status" value="1"/>
</dbReference>
<dbReference type="NCBIfam" id="NF009206">
    <property type="entry name" value="PRK12555.1"/>
    <property type="match status" value="1"/>
</dbReference>
<dbReference type="PANTHER" id="PTHR42872">
    <property type="entry name" value="PROTEIN-GLUTAMATE METHYLESTERASE/PROTEIN-GLUTAMINE GLUTAMINASE"/>
    <property type="match status" value="1"/>
</dbReference>
<dbReference type="PANTHER" id="PTHR42872:SF6">
    <property type="entry name" value="PROTEIN-GLUTAMATE METHYLESTERASE_PROTEIN-GLUTAMINE GLUTAMINASE"/>
    <property type="match status" value="1"/>
</dbReference>
<dbReference type="Pfam" id="PF01339">
    <property type="entry name" value="CheB_methylest"/>
    <property type="match status" value="1"/>
</dbReference>
<dbReference type="Pfam" id="PF00072">
    <property type="entry name" value="Response_reg"/>
    <property type="match status" value="1"/>
</dbReference>
<dbReference type="PIRSF" id="PIRSF000876">
    <property type="entry name" value="RR_chemtxs_CheB"/>
    <property type="match status" value="1"/>
</dbReference>
<dbReference type="SMART" id="SM00448">
    <property type="entry name" value="REC"/>
    <property type="match status" value="1"/>
</dbReference>
<dbReference type="SUPFAM" id="SSF52172">
    <property type="entry name" value="CheY-like"/>
    <property type="match status" value="1"/>
</dbReference>
<dbReference type="SUPFAM" id="SSF52738">
    <property type="entry name" value="Methylesterase CheB, C-terminal domain"/>
    <property type="match status" value="1"/>
</dbReference>
<dbReference type="PROSITE" id="PS50122">
    <property type="entry name" value="CHEB"/>
    <property type="match status" value="1"/>
</dbReference>
<dbReference type="PROSITE" id="PS50110">
    <property type="entry name" value="RESPONSE_REGULATORY"/>
    <property type="match status" value="1"/>
</dbReference>